<comment type="function">
    <text evidence="1">Catalyzes the transfer of the phosphoribosyl group of 5-phosphorylribose-1-pyrophosphate (PRPP) to anthranilate to yield N-(5'-phosphoribosyl)-anthranilate (PRA).</text>
</comment>
<comment type="catalytic activity">
    <reaction evidence="1">
        <text>N-(5-phospho-beta-D-ribosyl)anthranilate + diphosphate = 5-phospho-alpha-D-ribose 1-diphosphate + anthranilate</text>
        <dbReference type="Rhea" id="RHEA:11768"/>
        <dbReference type="ChEBI" id="CHEBI:16567"/>
        <dbReference type="ChEBI" id="CHEBI:18277"/>
        <dbReference type="ChEBI" id="CHEBI:33019"/>
        <dbReference type="ChEBI" id="CHEBI:58017"/>
        <dbReference type="EC" id="2.4.2.18"/>
    </reaction>
</comment>
<comment type="cofactor">
    <cofactor evidence="1">
        <name>Mg(2+)</name>
        <dbReference type="ChEBI" id="CHEBI:18420"/>
    </cofactor>
    <text evidence="1">Binds 2 magnesium ions per monomer.</text>
</comment>
<comment type="pathway">
    <text evidence="1">Amino-acid biosynthesis; L-tryptophan biosynthesis; L-tryptophan from chorismate: step 2/5.</text>
</comment>
<comment type="subunit">
    <text evidence="1">Homodimer.</text>
</comment>
<comment type="similarity">
    <text evidence="1">Belongs to the anthranilate phosphoribosyltransferase family.</text>
</comment>
<name>TRPD_BORBR</name>
<protein>
    <recommendedName>
        <fullName evidence="1">Anthranilate phosphoribosyltransferase</fullName>
        <ecNumber evidence="1">2.4.2.18</ecNumber>
    </recommendedName>
</protein>
<feature type="chain" id="PRO_0000227136" description="Anthranilate phosphoribosyltransferase">
    <location>
        <begin position="1"/>
        <end position="343"/>
    </location>
</feature>
<feature type="binding site" evidence="1">
    <location>
        <position position="84"/>
    </location>
    <ligand>
        <name>5-phospho-alpha-D-ribose 1-diphosphate</name>
        <dbReference type="ChEBI" id="CHEBI:58017"/>
    </ligand>
</feature>
<feature type="binding site" evidence="1">
    <location>
        <position position="84"/>
    </location>
    <ligand>
        <name>anthranilate</name>
        <dbReference type="ChEBI" id="CHEBI:16567"/>
        <label>1</label>
    </ligand>
</feature>
<feature type="binding site" evidence="1">
    <location>
        <begin position="87"/>
        <end position="88"/>
    </location>
    <ligand>
        <name>5-phospho-alpha-D-ribose 1-diphosphate</name>
        <dbReference type="ChEBI" id="CHEBI:58017"/>
    </ligand>
</feature>
<feature type="binding site" evidence="1">
    <location>
        <position position="92"/>
    </location>
    <ligand>
        <name>5-phospho-alpha-D-ribose 1-diphosphate</name>
        <dbReference type="ChEBI" id="CHEBI:58017"/>
    </ligand>
</feature>
<feature type="binding site" evidence="1">
    <location>
        <begin position="94"/>
        <end position="97"/>
    </location>
    <ligand>
        <name>5-phospho-alpha-D-ribose 1-diphosphate</name>
        <dbReference type="ChEBI" id="CHEBI:58017"/>
    </ligand>
</feature>
<feature type="binding site" evidence="1">
    <location>
        <position position="96"/>
    </location>
    <ligand>
        <name>Mg(2+)</name>
        <dbReference type="ChEBI" id="CHEBI:18420"/>
        <label>1</label>
    </ligand>
</feature>
<feature type="binding site" evidence="1">
    <location>
        <begin position="112"/>
        <end position="120"/>
    </location>
    <ligand>
        <name>5-phospho-alpha-D-ribose 1-diphosphate</name>
        <dbReference type="ChEBI" id="CHEBI:58017"/>
    </ligand>
</feature>
<feature type="binding site" evidence="1">
    <location>
        <position position="115"/>
    </location>
    <ligand>
        <name>anthranilate</name>
        <dbReference type="ChEBI" id="CHEBI:16567"/>
        <label>1</label>
    </ligand>
</feature>
<feature type="binding site" evidence="1">
    <location>
        <position position="124"/>
    </location>
    <ligand>
        <name>5-phospho-alpha-D-ribose 1-diphosphate</name>
        <dbReference type="ChEBI" id="CHEBI:58017"/>
    </ligand>
</feature>
<feature type="binding site" evidence="1">
    <location>
        <position position="170"/>
    </location>
    <ligand>
        <name>anthranilate</name>
        <dbReference type="ChEBI" id="CHEBI:16567"/>
        <label>2</label>
    </ligand>
</feature>
<feature type="binding site" evidence="1">
    <location>
        <position position="229"/>
    </location>
    <ligand>
        <name>Mg(2+)</name>
        <dbReference type="ChEBI" id="CHEBI:18420"/>
        <label>2</label>
    </ligand>
</feature>
<feature type="binding site" evidence="1">
    <location>
        <position position="230"/>
    </location>
    <ligand>
        <name>Mg(2+)</name>
        <dbReference type="ChEBI" id="CHEBI:18420"/>
        <label>1</label>
    </ligand>
</feature>
<feature type="binding site" evidence="1">
    <location>
        <position position="230"/>
    </location>
    <ligand>
        <name>Mg(2+)</name>
        <dbReference type="ChEBI" id="CHEBI:18420"/>
        <label>2</label>
    </ligand>
</feature>
<proteinExistence type="inferred from homology"/>
<gene>
    <name evidence="1" type="primary">trpD</name>
    <name type="ordered locus">BB4628</name>
</gene>
<organism>
    <name type="scientific">Bordetella bronchiseptica (strain ATCC BAA-588 / NCTC 13252 / RB50)</name>
    <name type="common">Alcaligenes bronchisepticus</name>
    <dbReference type="NCBI Taxonomy" id="257310"/>
    <lineage>
        <taxon>Bacteria</taxon>
        <taxon>Pseudomonadati</taxon>
        <taxon>Pseudomonadota</taxon>
        <taxon>Betaproteobacteria</taxon>
        <taxon>Burkholderiales</taxon>
        <taxon>Alcaligenaceae</taxon>
        <taxon>Bordetella</taxon>
    </lineage>
</organism>
<dbReference type="EC" id="2.4.2.18" evidence="1"/>
<dbReference type="EMBL" id="BX640451">
    <property type="protein sequence ID" value="CAE34990.1"/>
    <property type="molecule type" value="Genomic_DNA"/>
</dbReference>
<dbReference type="RefSeq" id="WP_003815392.1">
    <property type="nucleotide sequence ID" value="NC_002927.3"/>
</dbReference>
<dbReference type="SMR" id="Q7WEK7"/>
<dbReference type="GeneID" id="93205954"/>
<dbReference type="KEGG" id="bbr:BB4628"/>
<dbReference type="eggNOG" id="COG0547">
    <property type="taxonomic scope" value="Bacteria"/>
</dbReference>
<dbReference type="HOGENOM" id="CLU_034315_2_1_4"/>
<dbReference type="UniPathway" id="UPA00035">
    <property type="reaction ID" value="UER00041"/>
</dbReference>
<dbReference type="Proteomes" id="UP000001027">
    <property type="component" value="Chromosome"/>
</dbReference>
<dbReference type="GO" id="GO:0005829">
    <property type="term" value="C:cytosol"/>
    <property type="evidence" value="ECO:0007669"/>
    <property type="project" value="TreeGrafter"/>
</dbReference>
<dbReference type="GO" id="GO:0004048">
    <property type="term" value="F:anthranilate phosphoribosyltransferase activity"/>
    <property type="evidence" value="ECO:0007669"/>
    <property type="project" value="UniProtKB-UniRule"/>
</dbReference>
<dbReference type="GO" id="GO:0000287">
    <property type="term" value="F:magnesium ion binding"/>
    <property type="evidence" value="ECO:0007669"/>
    <property type="project" value="UniProtKB-UniRule"/>
</dbReference>
<dbReference type="GO" id="GO:0000162">
    <property type="term" value="P:L-tryptophan biosynthetic process"/>
    <property type="evidence" value="ECO:0007669"/>
    <property type="project" value="UniProtKB-UniRule"/>
</dbReference>
<dbReference type="FunFam" id="3.40.1030.10:FF:000002">
    <property type="entry name" value="Anthranilate phosphoribosyltransferase"/>
    <property type="match status" value="1"/>
</dbReference>
<dbReference type="Gene3D" id="3.40.1030.10">
    <property type="entry name" value="Nucleoside phosphorylase/phosphoribosyltransferase catalytic domain"/>
    <property type="match status" value="1"/>
</dbReference>
<dbReference type="Gene3D" id="1.20.970.10">
    <property type="entry name" value="Transferase, Pyrimidine Nucleoside Phosphorylase, Chain C"/>
    <property type="match status" value="1"/>
</dbReference>
<dbReference type="HAMAP" id="MF_00211">
    <property type="entry name" value="TrpD"/>
    <property type="match status" value="1"/>
</dbReference>
<dbReference type="InterPro" id="IPR005940">
    <property type="entry name" value="Anthranilate_Pribosyl_Tfrase"/>
</dbReference>
<dbReference type="InterPro" id="IPR000312">
    <property type="entry name" value="Glycosyl_Trfase_fam3"/>
</dbReference>
<dbReference type="InterPro" id="IPR017459">
    <property type="entry name" value="Glycosyl_Trfase_fam3_N_dom"/>
</dbReference>
<dbReference type="InterPro" id="IPR036320">
    <property type="entry name" value="Glycosyl_Trfase_fam3_N_dom_sf"/>
</dbReference>
<dbReference type="InterPro" id="IPR035902">
    <property type="entry name" value="Nuc_phospho_transferase"/>
</dbReference>
<dbReference type="NCBIfam" id="TIGR01245">
    <property type="entry name" value="trpD"/>
    <property type="match status" value="1"/>
</dbReference>
<dbReference type="PANTHER" id="PTHR43285">
    <property type="entry name" value="ANTHRANILATE PHOSPHORIBOSYLTRANSFERASE"/>
    <property type="match status" value="1"/>
</dbReference>
<dbReference type="PANTHER" id="PTHR43285:SF2">
    <property type="entry name" value="ANTHRANILATE PHOSPHORIBOSYLTRANSFERASE"/>
    <property type="match status" value="1"/>
</dbReference>
<dbReference type="Pfam" id="PF02885">
    <property type="entry name" value="Glycos_trans_3N"/>
    <property type="match status" value="1"/>
</dbReference>
<dbReference type="Pfam" id="PF00591">
    <property type="entry name" value="Glycos_transf_3"/>
    <property type="match status" value="1"/>
</dbReference>
<dbReference type="SUPFAM" id="SSF52418">
    <property type="entry name" value="Nucleoside phosphorylase/phosphoribosyltransferase catalytic domain"/>
    <property type="match status" value="1"/>
</dbReference>
<dbReference type="SUPFAM" id="SSF47648">
    <property type="entry name" value="Nucleoside phosphorylase/phosphoribosyltransferase N-terminal domain"/>
    <property type="match status" value="1"/>
</dbReference>
<evidence type="ECO:0000255" key="1">
    <source>
        <dbReference type="HAMAP-Rule" id="MF_00211"/>
    </source>
</evidence>
<reference key="1">
    <citation type="journal article" date="2003" name="Nat. Genet.">
        <title>Comparative analysis of the genome sequences of Bordetella pertussis, Bordetella parapertussis and Bordetella bronchiseptica.</title>
        <authorList>
            <person name="Parkhill J."/>
            <person name="Sebaihia M."/>
            <person name="Preston A."/>
            <person name="Murphy L.D."/>
            <person name="Thomson N.R."/>
            <person name="Harris D.E."/>
            <person name="Holden M.T.G."/>
            <person name="Churcher C.M."/>
            <person name="Bentley S.D."/>
            <person name="Mungall K.L."/>
            <person name="Cerdeno-Tarraga A.-M."/>
            <person name="Temple L."/>
            <person name="James K.D."/>
            <person name="Harris B."/>
            <person name="Quail M.A."/>
            <person name="Achtman M."/>
            <person name="Atkin R."/>
            <person name="Baker S."/>
            <person name="Basham D."/>
            <person name="Bason N."/>
            <person name="Cherevach I."/>
            <person name="Chillingworth T."/>
            <person name="Collins M."/>
            <person name="Cronin A."/>
            <person name="Davis P."/>
            <person name="Doggett J."/>
            <person name="Feltwell T."/>
            <person name="Goble A."/>
            <person name="Hamlin N."/>
            <person name="Hauser H."/>
            <person name="Holroyd S."/>
            <person name="Jagels K."/>
            <person name="Leather S."/>
            <person name="Moule S."/>
            <person name="Norberczak H."/>
            <person name="O'Neil S."/>
            <person name="Ormond D."/>
            <person name="Price C."/>
            <person name="Rabbinowitsch E."/>
            <person name="Rutter S."/>
            <person name="Sanders M."/>
            <person name="Saunders D."/>
            <person name="Seeger K."/>
            <person name="Sharp S."/>
            <person name="Simmonds M."/>
            <person name="Skelton J."/>
            <person name="Squares R."/>
            <person name="Squares S."/>
            <person name="Stevens K."/>
            <person name="Unwin L."/>
            <person name="Whitehead S."/>
            <person name="Barrell B.G."/>
            <person name="Maskell D.J."/>
        </authorList>
    </citation>
    <scope>NUCLEOTIDE SEQUENCE [LARGE SCALE GENOMIC DNA]</scope>
    <source>
        <strain>ATCC BAA-588 / NCTC 13252 / RB50</strain>
    </source>
</reference>
<sequence>MTIAAAEALTRCIEHREIFHDEMLHLMRLLMRGELSPQIASALLMGLRVKKETVGEITAAAQVMREFATPVVTPNPQDLLDMCGTGGDGSHTFNISTTAMFVAAAAGVPIAKHGNRSASSSSGSADVLEALGANLQLTPEEVAECVAATGIGFMFAPAHHGAMKNVAAVRKELGVRTIFNILGPLTNPAGAANQLMGVFHPDLVGIQVRVLERLGSRHVLVVHGKDGMDEASLGAATMVGELKDGVVREYEIHPEDYGLSMMSNRGIKVSNREESRALVIEALDNVDGVARDIVALNAGLAIYAGNKADSIPEALALAFETISNGSARAKLEEFCAYTRKFQK</sequence>
<accession>Q7WEK7</accession>
<keyword id="KW-0028">Amino-acid biosynthesis</keyword>
<keyword id="KW-0057">Aromatic amino acid biosynthesis</keyword>
<keyword id="KW-0328">Glycosyltransferase</keyword>
<keyword id="KW-0460">Magnesium</keyword>
<keyword id="KW-0479">Metal-binding</keyword>
<keyword id="KW-0808">Transferase</keyword>
<keyword id="KW-0822">Tryptophan biosynthesis</keyword>